<gene>
    <name evidence="1" type="primary">secA</name>
</gene>
<accession>P0A4G7</accession>
<accession>P55021</accession>
<accession>P95725</accession>
<accession>Q54396</accession>
<evidence type="ECO:0000255" key="1">
    <source>
        <dbReference type="HAMAP-Rule" id="MF_01382"/>
    </source>
</evidence>
<evidence type="ECO:0000256" key="2">
    <source>
        <dbReference type="SAM" id="MobiDB-lite"/>
    </source>
</evidence>
<evidence type="ECO:0000305" key="3"/>
<comment type="function">
    <text evidence="1">Part of the Sec protein translocase complex. Interacts with the SecYEG preprotein conducting channel. Has a central role in coupling the hydrolysis of ATP to the transfer of proteins into and across the cell membrane, serving as an ATP-driven molecular motor driving the stepwise translocation of polypeptide chains across the membrane.</text>
</comment>
<comment type="catalytic activity">
    <reaction evidence="1">
        <text>ATP + H2O + cellular proteinSide 1 = ADP + phosphate + cellular proteinSide 2.</text>
        <dbReference type="EC" id="7.4.2.8"/>
    </reaction>
</comment>
<comment type="subunit">
    <text evidence="1">Monomer and homodimer. Part of the essential Sec protein translocation apparatus which comprises SecA, SecYEG and auxiliary proteins SecDF. Other proteins may also be involved.</text>
</comment>
<comment type="subcellular location">
    <subcellularLocation>
        <location evidence="1">Cell membrane</location>
        <topology evidence="1">Peripheral membrane protein</topology>
        <orientation evidence="1">Cytoplasmic side</orientation>
    </subcellularLocation>
    <subcellularLocation>
        <location evidence="1">Cytoplasm</location>
    </subcellularLocation>
    <text evidence="1">Distribution is 50-50.</text>
</comment>
<comment type="miscellaneous">
    <text>Restores azide sensitivity to E.coli azide-insensitive mutants, but is not able to complement temperature-sensitive mutants.</text>
</comment>
<comment type="similarity">
    <text evidence="1">Belongs to the SecA family.</text>
</comment>
<reference key="1">
    <citation type="journal article" date="1996" name="Biochim. Biophys. Acta">
        <title>Cloning of a secA homolog from Streptomyces lividans 1326 and overexpression in both S. lividans and Escherichia coli.</title>
        <authorList>
            <person name="Gilbert M."/>
            <person name="Ostiguy S."/>
            <person name="Kluepfel D."/>
            <person name="Morosoli R."/>
        </authorList>
    </citation>
    <scope>NUCLEOTIDE SEQUENCE [GENOMIC DNA]</scope>
    <scope>CHARACTERIZATION OF COMPLEMENTATION OF E.COLI MUTANTS</scope>
    <source>
        <strain>66 / 1326</strain>
    </source>
</reference>
<reference key="2">
    <citation type="journal article" date="1996" name="Gene">
        <title>Characterization of the secA gene of Streptomyces lividans encoding a protein translocase which complements an Escherichia coli mutant defective in the ATPase activity of SecA.</title>
        <authorList>
            <person name="Blanco J."/>
            <person name="Coque J."/>
            <person name="Martin J."/>
        </authorList>
    </citation>
    <scope>NUCLEOTIDE SEQUENCE [GENOMIC DNA]</scope>
    <source>
        <strain>66 / 1326</strain>
    </source>
</reference>
<reference key="3">
    <citation type="submission" date="1997-07" db="EMBL/GenBank/DDBJ databases">
        <authorList>
            <person name="Blanco J."/>
        </authorList>
    </citation>
    <scope>SEQUENCE REVISION TO 712-723</scope>
    <source>
        <strain>66 / 1326</strain>
    </source>
</reference>
<organism>
    <name type="scientific">Streptomyces lividans</name>
    <dbReference type="NCBI Taxonomy" id="1916"/>
    <lineage>
        <taxon>Bacteria</taxon>
        <taxon>Bacillati</taxon>
        <taxon>Actinomycetota</taxon>
        <taxon>Actinomycetes</taxon>
        <taxon>Kitasatosporales</taxon>
        <taxon>Streptomycetaceae</taxon>
        <taxon>Streptomyces</taxon>
    </lineage>
</organism>
<feature type="chain" id="PRO_0000109616" description="Protein translocase subunit SecA">
    <location>
        <begin position="1"/>
        <end position="947"/>
    </location>
</feature>
<feature type="region of interest" description="Disordered" evidence="2">
    <location>
        <begin position="864"/>
        <end position="947"/>
    </location>
</feature>
<feature type="compositionally biased region" description="Basic and acidic residues" evidence="2">
    <location>
        <begin position="884"/>
        <end position="900"/>
    </location>
</feature>
<feature type="compositionally biased region" description="Basic residues" evidence="2">
    <location>
        <begin position="934"/>
        <end position="947"/>
    </location>
</feature>
<feature type="binding site" evidence="1">
    <location>
        <position position="85"/>
    </location>
    <ligand>
        <name>ATP</name>
        <dbReference type="ChEBI" id="CHEBI:30616"/>
    </ligand>
</feature>
<feature type="binding site" evidence="1">
    <location>
        <begin position="103"/>
        <end position="107"/>
    </location>
    <ligand>
        <name>ATP</name>
        <dbReference type="ChEBI" id="CHEBI:30616"/>
    </ligand>
</feature>
<feature type="binding site" evidence="1">
    <location>
        <position position="514"/>
    </location>
    <ligand>
        <name>ATP</name>
        <dbReference type="ChEBI" id="CHEBI:30616"/>
    </ligand>
</feature>
<feature type="sequence conflict" description="In Ref. 2; CAA90577." evidence="3" ref="2">
    <original>A</original>
    <variation>R</variation>
    <location>
        <position position="494"/>
    </location>
</feature>
<keyword id="KW-0067">ATP-binding</keyword>
<keyword id="KW-1003">Cell membrane</keyword>
<keyword id="KW-0963">Cytoplasm</keyword>
<keyword id="KW-0472">Membrane</keyword>
<keyword id="KW-0547">Nucleotide-binding</keyword>
<keyword id="KW-0653">Protein transport</keyword>
<keyword id="KW-1278">Translocase</keyword>
<keyword id="KW-0811">Translocation</keyword>
<keyword id="KW-0813">Transport</keyword>
<name>SECA_STRLI</name>
<dbReference type="EC" id="7.4.2.8" evidence="1"/>
<dbReference type="EMBL" id="U21192">
    <property type="protein sequence ID" value="AAC44331.1"/>
    <property type="molecule type" value="Genomic_DNA"/>
</dbReference>
<dbReference type="EMBL" id="Z50195">
    <property type="protein sequence ID" value="CAA90577.1"/>
    <property type="molecule type" value="Genomic_DNA"/>
</dbReference>
<dbReference type="PIR" id="S71922">
    <property type="entry name" value="S71922"/>
</dbReference>
<dbReference type="SMR" id="P0A4G7"/>
<dbReference type="GO" id="GO:0031522">
    <property type="term" value="C:cell envelope Sec protein transport complex"/>
    <property type="evidence" value="ECO:0007669"/>
    <property type="project" value="TreeGrafter"/>
</dbReference>
<dbReference type="GO" id="GO:0005829">
    <property type="term" value="C:cytosol"/>
    <property type="evidence" value="ECO:0007669"/>
    <property type="project" value="TreeGrafter"/>
</dbReference>
<dbReference type="GO" id="GO:0005886">
    <property type="term" value="C:plasma membrane"/>
    <property type="evidence" value="ECO:0007669"/>
    <property type="project" value="UniProtKB-SubCell"/>
</dbReference>
<dbReference type="GO" id="GO:0005524">
    <property type="term" value="F:ATP binding"/>
    <property type="evidence" value="ECO:0007669"/>
    <property type="project" value="UniProtKB-UniRule"/>
</dbReference>
<dbReference type="GO" id="GO:0008564">
    <property type="term" value="F:protein-exporting ATPase activity"/>
    <property type="evidence" value="ECO:0007669"/>
    <property type="project" value="UniProtKB-EC"/>
</dbReference>
<dbReference type="GO" id="GO:0065002">
    <property type="term" value="P:intracellular protein transmembrane transport"/>
    <property type="evidence" value="ECO:0007669"/>
    <property type="project" value="UniProtKB-UniRule"/>
</dbReference>
<dbReference type="GO" id="GO:0017038">
    <property type="term" value="P:protein import"/>
    <property type="evidence" value="ECO:0007669"/>
    <property type="project" value="InterPro"/>
</dbReference>
<dbReference type="GO" id="GO:0006605">
    <property type="term" value="P:protein targeting"/>
    <property type="evidence" value="ECO:0007669"/>
    <property type="project" value="UniProtKB-UniRule"/>
</dbReference>
<dbReference type="GO" id="GO:0043952">
    <property type="term" value="P:protein transport by the Sec complex"/>
    <property type="evidence" value="ECO:0007669"/>
    <property type="project" value="TreeGrafter"/>
</dbReference>
<dbReference type="CDD" id="cd17928">
    <property type="entry name" value="DEXDc_SecA"/>
    <property type="match status" value="1"/>
</dbReference>
<dbReference type="CDD" id="cd18803">
    <property type="entry name" value="SF2_C_secA"/>
    <property type="match status" value="1"/>
</dbReference>
<dbReference type="FunFam" id="1.10.3060.10:FF:000002">
    <property type="entry name" value="Preprotein translocase subunit SecA"/>
    <property type="match status" value="1"/>
</dbReference>
<dbReference type="FunFam" id="3.40.50.300:FF:000113">
    <property type="entry name" value="Preprotein translocase subunit SecA"/>
    <property type="match status" value="1"/>
</dbReference>
<dbReference type="FunFam" id="3.40.50.300:FF:000334">
    <property type="entry name" value="Protein translocase subunit SecA"/>
    <property type="match status" value="1"/>
</dbReference>
<dbReference type="FunFam" id="3.90.1440.10:FF:000002">
    <property type="entry name" value="Protein translocase subunit SecA"/>
    <property type="match status" value="1"/>
</dbReference>
<dbReference type="Gene3D" id="1.10.3060.10">
    <property type="entry name" value="Helical scaffold and wing domains of SecA"/>
    <property type="match status" value="1"/>
</dbReference>
<dbReference type="Gene3D" id="3.40.50.300">
    <property type="entry name" value="P-loop containing nucleotide triphosphate hydrolases"/>
    <property type="match status" value="2"/>
</dbReference>
<dbReference type="Gene3D" id="3.90.1440.10">
    <property type="entry name" value="SecA, preprotein cross-linking domain"/>
    <property type="match status" value="1"/>
</dbReference>
<dbReference type="HAMAP" id="MF_01382">
    <property type="entry name" value="SecA"/>
    <property type="match status" value="1"/>
</dbReference>
<dbReference type="InterPro" id="IPR014001">
    <property type="entry name" value="Helicase_ATP-bd"/>
</dbReference>
<dbReference type="InterPro" id="IPR001650">
    <property type="entry name" value="Helicase_C-like"/>
</dbReference>
<dbReference type="InterPro" id="IPR027417">
    <property type="entry name" value="P-loop_NTPase"/>
</dbReference>
<dbReference type="InterPro" id="IPR000185">
    <property type="entry name" value="SecA"/>
</dbReference>
<dbReference type="InterPro" id="IPR020937">
    <property type="entry name" value="SecA_CS"/>
</dbReference>
<dbReference type="InterPro" id="IPR011115">
    <property type="entry name" value="SecA_DEAD"/>
</dbReference>
<dbReference type="InterPro" id="IPR014018">
    <property type="entry name" value="SecA_motor_DEAD"/>
</dbReference>
<dbReference type="InterPro" id="IPR011130">
    <property type="entry name" value="SecA_preprotein_X-link_dom"/>
</dbReference>
<dbReference type="InterPro" id="IPR044722">
    <property type="entry name" value="SecA_SF2_C"/>
</dbReference>
<dbReference type="InterPro" id="IPR011116">
    <property type="entry name" value="SecA_Wing/Scaffold"/>
</dbReference>
<dbReference type="InterPro" id="IPR036266">
    <property type="entry name" value="SecA_Wing/Scaffold_sf"/>
</dbReference>
<dbReference type="InterPro" id="IPR036670">
    <property type="entry name" value="SecA_X-link_sf"/>
</dbReference>
<dbReference type="NCBIfam" id="NF009538">
    <property type="entry name" value="PRK12904.1"/>
    <property type="match status" value="1"/>
</dbReference>
<dbReference type="NCBIfam" id="TIGR00963">
    <property type="entry name" value="secA"/>
    <property type="match status" value="1"/>
</dbReference>
<dbReference type="PANTHER" id="PTHR30612:SF0">
    <property type="entry name" value="CHLOROPLAST PROTEIN-TRANSPORTING ATPASE"/>
    <property type="match status" value="1"/>
</dbReference>
<dbReference type="PANTHER" id="PTHR30612">
    <property type="entry name" value="SECA INNER MEMBRANE COMPONENT OF SEC PROTEIN SECRETION SYSTEM"/>
    <property type="match status" value="1"/>
</dbReference>
<dbReference type="Pfam" id="PF21090">
    <property type="entry name" value="P-loop_SecA"/>
    <property type="match status" value="1"/>
</dbReference>
<dbReference type="Pfam" id="PF07517">
    <property type="entry name" value="SecA_DEAD"/>
    <property type="match status" value="1"/>
</dbReference>
<dbReference type="Pfam" id="PF01043">
    <property type="entry name" value="SecA_PP_bind"/>
    <property type="match status" value="1"/>
</dbReference>
<dbReference type="Pfam" id="PF07516">
    <property type="entry name" value="SecA_SW"/>
    <property type="match status" value="1"/>
</dbReference>
<dbReference type="PRINTS" id="PR00906">
    <property type="entry name" value="SECA"/>
</dbReference>
<dbReference type="SMART" id="SM00957">
    <property type="entry name" value="SecA_DEAD"/>
    <property type="match status" value="1"/>
</dbReference>
<dbReference type="SMART" id="SM00958">
    <property type="entry name" value="SecA_PP_bind"/>
    <property type="match status" value="1"/>
</dbReference>
<dbReference type="SUPFAM" id="SSF81886">
    <property type="entry name" value="Helical scaffold and wing domains of SecA"/>
    <property type="match status" value="1"/>
</dbReference>
<dbReference type="SUPFAM" id="SSF52540">
    <property type="entry name" value="P-loop containing nucleoside triphosphate hydrolases"/>
    <property type="match status" value="2"/>
</dbReference>
<dbReference type="SUPFAM" id="SSF81767">
    <property type="entry name" value="Pre-protein crosslinking domain of SecA"/>
    <property type="match status" value="1"/>
</dbReference>
<dbReference type="PROSITE" id="PS01312">
    <property type="entry name" value="SECA"/>
    <property type="match status" value="1"/>
</dbReference>
<dbReference type="PROSITE" id="PS51196">
    <property type="entry name" value="SECA_MOTOR_DEAD"/>
    <property type="match status" value="1"/>
</dbReference>
<proteinExistence type="evidence at protein level"/>
<sequence length="947" mass="106456">MSVLSKLMRAGEGKILRKLHRIADQVNSIEEDFADLSDAELRALTDEYKQRYADGESLDDLLPEAFATVREAAKRVLGQRHYDVQIMGGAALHMGYVAEMKTGEGKTLVGTLPAYLNALSGEGVHIVTVNDYLAERDSELMGRVHKFLGLNVGCILANQTPAQRREMYACDITYGTNNEFGFDYLRDNMAWSKDELVQRGHNFAIVDEVDSILVDEARTPLIISGPADQATKWYGDFAKLVTRLKKGEAGNTLKGIEETGDYEVDEKKRTVAIHESGVAKVEDWLGIDNLYESVNTPLVGYLNNAIKAKELFKKDKDYVVLDGEVMIVDEHTGRILAGRRYNEGMHQAIEAKEGVDIKDENQTLATITLQNFFRLYKRHDHDGKEQPGLSGMTGTAMTEAAEFHQIYKLGVVPIPTNRPMVRKDQSDLIYRTEVAKFEAVVDDIEEKHRKGQPILVGTTSVEKSEYLSQQLSKRGVQHEVLNAKQHDREATIVAQAGRKGSVTVATNMAGRGTDIKLGGNPEDLAEAELRQRGLDPEEHIEEWAAALPAALERAEQAVKAEFEEVKELGGLYVLGTERHESRRIDNQLRGRSGRQGDPGESRFYLSLGDDLMRLFKAQMVERVMSMANVPDDVPIENKMVTRAIASAQSQVETQNFETRKNVLKYDEVLNRQREVIYGERRRVLEGEDLQEQIQHFTNDTIDAYVQAETAEGFPEDWDLDRLWGAFKQLYPVKVTVEELEEAAGDRAGLTADYIAESIKDDVREQYEAREKQLGSEIMRELERRVVLSVLDRKWREHLYEMDYLQEGIGLRAMAQKDPLVEYQREGFDMFQAMMDGIKEESVGYLFNLEVQVEQQVEEVPVEDAAPSLDKGAQDAVPAQAGARPEIRAKGLDAPQRRDLHFSAPTVDGEGGVVEGEFTDGEPAQAQSDGLTRAERRKQAKGGRRRKK</sequence>
<protein>
    <recommendedName>
        <fullName evidence="1">Protein translocase subunit SecA</fullName>
        <ecNumber evidence="1">7.4.2.8</ecNumber>
    </recommendedName>
</protein>